<name>LAMB_ECOSE</name>
<feature type="signal peptide" evidence="1">
    <location>
        <begin position="1"/>
        <end position="25"/>
    </location>
</feature>
<feature type="chain" id="PRO_1000140486" description="Maltoporin">
    <location>
        <begin position="26"/>
        <end position="446"/>
    </location>
</feature>
<feature type="site" description="Greasy slide, important in sugar transport" evidence="1">
    <location>
        <position position="31"/>
    </location>
</feature>
<feature type="site" description="Greasy slide, important in sugar transport" evidence="1">
    <location>
        <position position="66"/>
    </location>
</feature>
<feature type="site" description="Greasy slide, important in sugar transport" evidence="1">
    <location>
        <position position="99"/>
    </location>
</feature>
<feature type="site" description="Important in sugar transport" evidence="1">
    <location>
        <position position="143"/>
    </location>
</feature>
<feature type="site" description="Greasy slide, important in sugar transport" evidence="1">
    <location>
        <position position="252"/>
    </location>
</feature>
<feature type="site" description="Greasy slide, important in sugar transport" evidence="1">
    <location>
        <position position="383"/>
    </location>
</feature>
<feature type="site" description="Greasy slide, important in sugar transport" evidence="1">
    <location>
        <position position="445"/>
    </location>
</feature>
<keyword id="KW-0998">Cell outer membrane</keyword>
<keyword id="KW-0406">Ion transport</keyword>
<keyword id="KW-0472">Membrane</keyword>
<keyword id="KW-0626">Porin</keyword>
<keyword id="KW-0732">Signal</keyword>
<keyword id="KW-0762">Sugar transport</keyword>
<keyword id="KW-0812">Transmembrane</keyword>
<keyword id="KW-1134">Transmembrane beta strand</keyword>
<keyword id="KW-0813">Transport</keyword>
<organism>
    <name type="scientific">Escherichia coli (strain SE11)</name>
    <dbReference type="NCBI Taxonomy" id="409438"/>
    <lineage>
        <taxon>Bacteria</taxon>
        <taxon>Pseudomonadati</taxon>
        <taxon>Pseudomonadota</taxon>
        <taxon>Gammaproteobacteria</taxon>
        <taxon>Enterobacterales</taxon>
        <taxon>Enterobacteriaceae</taxon>
        <taxon>Escherichia</taxon>
    </lineage>
</organism>
<accession>B6I5Q0</accession>
<protein>
    <recommendedName>
        <fullName evidence="1">Maltoporin</fullName>
    </recommendedName>
    <alternativeName>
        <fullName evidence="1">Maltose-inducible porin</fullName>
    </alternativeName>
</protein>
<reference key="1">
    <citation type="journal article" date="2008" name="DNA Res.">
        <title>Complete genome sequence and comparative analysis of the wild-type commensal Escherichia coli strain SE11 isolated from a healthy adult.</title>
        <authorList>
            <person name="Oshima K."/>
            <person name="Toh H."/>
            <person name="Ogura Y."/>
            <person name="Sasamoto H."/>
            <person name="Morita H."/>
            <person name="Park S.-H."/>
            <person name="Ooka T."/>
            <person name="Iyoda S."/>
            <person name="Taylor T.D."/>
            <person name="Hayashi T."/>
            <person name="Itoh K."/>
            <person name="Hattori M."/>
        </authorList>
    </citation>
    <scope>NUCLEOTIDE SEQUENCE [LARGE SCALE GENOMIC DNA]</scope>
    <source>
        <strain>SE11</strain>
    </source>
</reference>
<gene>
    <name evidence="1" type="primary">lamB</name>
    <name type="ordered locus">ECSE_4327</name>
</gene>
<evidence type="ECO:0000255" key="1">
    <source>
        <dbReference type="HAMAP-Rule" id="MF_01301"/>
    </source>
</evidence>
<dbReference type="EMBL" id="AP009240">
    <property type="protein sequence ID" value="BAG79851.1"/>
    <property type="molecule type" value="Genomic_DNA"/>
</dbReference>
<dbReference type="RefSeq" id="WP_000973671.1">
    <property type="nucleotide sequence ID" value="NC_011415.1"/>
</dbReference>
<dbReference type="SMR" id="B6I5Q0"/>
<dbReference type="KEGG" id="ecy:ECSE_4327"/>
<dbReference type="HOGENOM" id="CLU_032473_4_1_6"/>
<dbReference type="Proteomes" id="UP000008199">
    <property type="component" value="Chromosome"/>
</dbReference>
<dbReference type="GO" id="GO:0009279">
    <property type="term" value="C:cell outer membrane"/>
    <property type="evidence" value="ECO:0007669"/>
    <property type="project" value="UniProtKB-SubCell"/>
</dbReference>
<dbReference type="GO" id="GO:0046930">
    <property type="term" value="C:pore complex"/>
    <property type="evidence" value="ECO:0007669"/>
    <property type="project" value="UniProtKB-KW"/>
</dbReference>
<dbReference type="GO" id="GO:0042958">
    <property type="term" value="F:maltodextrin transmembrane transporter activity"/>
    <property type="evidence" value="ECO:0007669"/>
    <property type="project" value="InterPro"/>
</dbReference>
<dbReference type="GO" id="GO:0015481">
    <property type="term" value="F:maltose transporting porin activity"/>
    <property type="evidence" value="ECO:0007669"/>
    <property type="project" value="InterPro"/>
</dbReference>
<dbReference type="GO" id="GO:0006811">
    <property type="term" value="P:monoatomic ion transport"/>
    <property type="evidence" value="ECO:0007669"/>
    <property type="project" value="UniProtKB-KW"/>
</dbReference>
<dbReference type="CDD" id="cd01346">
    <property type="entry name" value="Maltoporin-like"/>
    <property type="match status" value="1"/>
</dbReference>
<dbReference type="FunFam" id="2.40.170.10:FF:000001">
    <property type="entry name" value="Maltoporin"/>
    <property type="match status" value="1"/>
</dbReference>
<dbReference type="Gene3D" id="2.40.170.10">
    <property type="entry name" value="Porin, LamB type"/>
    <property type="match status" value="1"/>
</dbReference>
<dbReference type="HAMAP" id="MF_01301">
    <property type="entry name" value="LamB"/>
    <property type="match status" value="1"/>
</dbReference>
<dbReference type="InterPro" id="IPR050286">
    <property type="entry name" value="G_neg_Bact_CarbUptk_Porin"/>
</dbReference>
<dbReference type="InterPro" id="IPR023738">
    <property type="entry name" value="Maltoporin"/>
</dbReference>
<dbReference type="InterPro" id="IPR003192">
    <property type="entry name" value="Porin_LamB"/>
</dbReference>
<dbReference type="InterPro" id="IPR036998">
    <property type="entry name" value="Porin_LamB_sf"/>
</dbReference>
<dbReference type="NCBIfam" id="NF006860">
    <property type="entry name" value="PRK09360.1"/>
    <property type="match status" value="1"/>
</dbReference>
<dbReference type="PANTHER" id="PTHR38762">
    <property type="entry name" value="CRYPTIC OUTER MEMBRANE PORIN BGLH-RELATED"/>
    <property type="match status" value="1"/>
</dbReference>
<dbReference type="PANTHER" id="PTHR38762:SF1">
    <property type="entry name" value="CRYPTIC OUTER MEMBRANE PORIN BGLH-RELATED"/>
    <property type="match status" value="1"/>
</dbReference>
<dbReference type="Pfam" id="PF02264">
    <property type="entry name" value="LamB"/>
    <property type="match status" value="1"/>
</dbReference>
<dbReference type="SUPFAM" id="SSF56935">
    <property type="entry name" value="Porins"/>
    <property type="match status" value="1"/>
</dbReference>
<comment type="function">
    <text evidence="1">Involved in the transport of maltose and maltodextrins.</text>
</comment>
<comment type="catalytic activity">
    <reaction evidence="1">
        <text>beta-maltose(in) = beta-maltose(out)</text>
        <dbReference type="Rhea" id="RHEA:29731"/>
        <dbReference type="ChEBI" id="CHEBI:18147"/>
    </reaction>
</comment>
<comment type="subunit">
    <text evidence="1">Homotrimer formed of three 18-stranded antiparallel beta-barrels, containing three independent channels.</text>
</comment>
<comment type="subcellular location">
    <subcellularLocation>
        <location evidence="1">Cell outer membrane</location>
        <topology evidence="1">Multi-pass membrane protein</topology>
    </subcellularLocation>
</comment>
<comment type="induction">
    <text evidence="1">By maltose.</text>
</comment>
<comment type="similarity">
    <text evidence="1">Belongs to the porin LamB (TC 1.B.3) family.</text>
</comment>
<sequence length="446" mass="49981">MMITLRKLPLAVAVAAGVMSAQAMAVDFHGYARSGIGWTGSGGEQQCFQTTGAQSKYRLGNECETYAELKLGQEVWKEGDKSFYFDTNVAYSVAQQNDWEATDPAFREANVQGKNLIEWLPGSTIWAGKRFYQRHDVHMIDFYYWDISGPGAGLENIDVGFGKLSLAATRSSEAGGSSSFASNNIYDYTNETANDVFDVRLAQMEINPGGTLELGVDYGRANLRDNYRLVDGASKDGWLFTAEHTQSVLKGFNKFVVQYATDSMTSQGKGLSQGSGVAFDNQKFAYNINNNGHMLRILDHGAISMGDNWDMMYVGMYQDINWDNDNGTKWWTVGIRPMYKWTPIMSTVMEIGYDNVESQRTGDKNNQYKITLAQQWQAGDSIWSRPAIRVFATYAKWDEKWGYDYNGDSKVNPNYGKAVPADFNGGSFGRGDSDEWTFGAQMEIWW</sequence>
<proteinExistence type="inferred from homology"/>